<reference key="1">
    <citation type="journal article" date="2001" name="Genome Res.">
        <title>The complete genome sequence of the lactic acid bacterium Lactococcus lactis ssp. lactis IL1403.</title>
        <authorList>
            <person name="Bolotin A."/>
            <person name="Wincker P."/>
            <person name="Mauger S."/>
            <person name="Jaillon O."/>
            <person name="Malarme K."/>
            <person name="Weissenbach J."/>
            <person name="Ehrlich S.D."/>
            <person name="Sorokin A."/>
        </authorList>
    </citation>
    <scope>NUCLEOTIDE SEQUENCE [LARGE SCALE GENOMIC DNA]</scope>
    <source>
        <strain>IL1403</strain>
    </source>
</reference>
<dbReference type="EMBL" id="AE005176">
    <property type="protein sequence ID" value="AAK04865.1"/>
    <property type="molecule type" value="Genomic_DNA"/>
</dbReference>
<dbReference type="PIR" id="G86720">
    <property type="entry name" value="G86720"/>
</dbReference>
<dbReference type="RefSeq" id="NP_266923.1">
    <property type="nucleotide sequence ID" value="NC_002662.1"/>
</dbReference>
<dbReference type="RefSeq" id="WP_003132492.1">
    <property type="nucleotide sequence ID" value="NC_002662.1"/>
</dbReference>
<dbReference type="SMR" id="P58002"/>
<dbReference type="PaxDb" id="272623-L0372"/>
<dbReference type="EnsemblBacteria" id="AAK04865">
    <property type="protein sequence ID" value="AAK04865"/>
    <property type="gene ID" value="L0372"/>
</dbReference>
<dbReference type="KEGG" id="lla:L0372"/>
<dbReference type="PATRIC" id="fig|272623.7.peg.822"/>
<dbReference type="eggNOG" id="COG0532">
    <property type="taxonomic scope" value="Bacteria"/>
</dbReference>
<dbReference type="HOGENOM" id="CLU_006301_5_0_9"/>
<dbReference type="OrthoDB" id="9811804at2"/>
<dbReference type="Proteomes" id="UP000002196">
    <property type="component" value="Chromosome"/>
</dbReference>
<dbReference type="GO" id="GO:0005829">
    <property type="term" value="C:cytosol"/>
    <property type="evidence" value="ECO:0007669"/>
    <property type="project" value="TreeGrafter"/>
</dbReference>
<dbReference type="GO" id="GO:0005525">
    <property type="term" value="F:GTP binding"/>
    <property type="evidence" value="ECO:0007669"/>
    <property type="project" value="UniProtKB-KW"/>
</dbReference>
<dbReference type="GO" id="GO:0003924">
    <property type="term" value="F:GTPase activity"/>
    <property type="evidence" value="ECO:0007669"/>
    <property type="project" value="UniProtKB-UniRule"/>
</dbReference>
<dbReference type="GO" id="GO:0003743">
    <property type="term" value="F:translation initiation factor activity"/>
    <property type="evidence" value="ECO:0007669"/>
    <property type="project" value="UniProtKB-UniRule"/>
</dbReference>
<dbReference type="CDD" id="cd01887">
    <property type="entry name" value="IF2_eIF5B"/>
    <property type="match status" value="1"/>
</dbReference>
<dbReference type="CDD" id="cd03702">
    <property type="entry name" value="IF2_mtIF2_II"/>
    <property type="match status" value="1"/>
</dbReference>
<dbReference type="CDD" id="cd03692">
    <property type="entry name" value="mtIF2_IVc"/>
    <property type="match status" value="1"/>
</dbReference>
<dbReference type="FunFam" id="2.40.30.10:FF:000007">
    <property type="entry name" value="Translation initiation factor IF-2"/>
    <property type="match status" value="1"/>
</dbReference>
<dbReference type="FunFam" id="2.40.30.10:FF:000008">
    <property type="entry name" value="Translation initiation factor IF-2"/>
    <property type="match status" value="1"/>
</dbReference>
<dbReference type="FunFam" id="3.40.50.10050:FF:000001">
    <property type="entry name" value="Translation initiation factor IF-2"/>
    <property type="match status" value="1"/>
</dbReference>
<dbReference type="FunFam" id="3.40.50.300:FF:000019">
    <property type="entry name" value="Translation initiation factor IF-2"/>
    <property type="match status" value="1"/>
</dbReference>
<dbReference type="Gene3D" id="1.10.10.2480">
    <property type="match status" value="1"/>
</dbReference>
<dbReference type="Gene3D" id="3.40.50.300">
    <property type="entry name" value="P-loop containing nucleotide triphosphate hydrolases"/>
    <property type="match status" value="1"/>
</dbReference>
<dbReference type="Gene3D" id="2.40.30.10">
    <property type="entry name" value="Translation factors"/>
    <property type="match status" value="2"/>
</dbReference>
<dbReference type="Gene3D" id="3.40.50.10050">
    <property type="entry name" value="Translation initiation factor IF- 2, domain 3"/>
    <property type="match status" value="1"/>
</dbReference>
<dbReference type="HAMAP" id="MF_00100_B">
    <property type="entry name" value="IF_2_B"/>
    <property type="match status" value="1"/>
</dbReference>
<dbReference type="InterPro" id="IPR053905">
    <property type="entry name" value="EF-G-like_DII"/>
</dbReference>
<dbReference type="InterPro" id="IPR044145">
    <property type="entry name" value="IF2_II"/>
</dbReference>
<dbReference type="InterPro" id="IPR006847">
    <property type="entry name" value="IF2_N"/>
</dbReference>
<dbReference type="InterPro" id="IPR027417">
    <property type="entry name" value="P-loop_NTPase"/>
</dbReference>
<dbReference type="InterPro" id="IPR005225">
    <property type="entry name" value="Small_GTP-bd"/>
</dbReference>
<dbReference type="InterPro" id="IPR000795">
    <property type="entry name" value="T_Tr_GTP-bd_dom"/>
</dbReference>
<dbReference type="InterPro" id="IPR000178">
    <property type="entry name" value="TF_IF2_bacterial-like"/>
</dbReference>
<dbReference type="InterPro" id="IPR015760">
    <property type="entry name" value="TIF_IF2"/>
</dbReference>
<dbReference type="InterPro" id="IPR023115">
    <property type="entry name" value="TIF_IF2_dom3"/>
</dbReference>
<dbReference type="InterPro" id="IPR036925">
    <property type="entry name" value="TIF_IF2_dom3_sf"/>
</dbReference>
<dbReference type="InterPro" id="IPR009000">
    <property type="entry name" value="Transl_B-barrel_sf"/>
</dbReference>
<dbReference type="NCBIfam" id="TIGR00487">
    <property type="entry name" value="IF-2"/>
    <property type="match status" value="1"/>
</dbReference>
<dbReference type="NCBIfam" id="TIGR00231">
    <property type="entry name" value="small_GTP"/>
    <property type="match status" value="1"/>
</dbReference>
<dbReference type="PANTHER" id="PTHR43381:SF5">
    <property type="entry name" value="TR-TYPE G DOMAIN-CONTAINING PROTEIN"/>
    <property type="match status" value="1"/>
</dbReference>
<dbReference type="PANTHER" id="PTHR43381">
    <property type="entry name" value="TRANSLATION INITIATION FACTOR IF-2-RELATED"/>
    <property type="match status" value="1"/>
</dbReference>
<dbReference type="Pfam" id="PF22042">
    <property type="entry name" value="EF-G_D2"/>
    <property type="match status" value="1"/>
</dbReference>
<dbReference type="Pfam" id="PF00009">
    <property type="entry name" value="GTP_EFTU"/>
    <property type="match status" value="1"/>
</dbReference>
<dbReference type="Pfam" id="PF11987">
    <property type="entry name" value="IF-2"/>
    <property type="match status" value="1"/>
</dbReference>
<dbReference type="Pfam" id="PF04760">
    <property type="entry name" value="IF2_N"/>
    <property type="match status" value="2"/>
</dbReference>
<dbReference type="PRINTS" id="PR00449">
    <property type="entry name" value="RASTRNSFRMNG"/>
</dbReference>
<dbReference type="SUPFAM" id="SSF52156">
    <property type="entry name" value="Initiation factor IF2/eIF5b, domain 3"/>
    <property type="match status" value="1"/>
</dbReference>
<dbReference type="SUPFAM" id="SSF52540">
    <property type="entry name" value="P-loop containing nucleoside triphosphate hydrolases"/>
    <property type="match status" value="1"/>
</dbReference>
<dbReference type="SUPFAM" id="SSF50447">
    <property type="entry name" value="Translation proteins"/>
    <property type="match status" value="2"/>
</dbReference>
<dbReference type="PROSITE" id="PS51722">
    <property type="entry name" value="G_TR_2"/>
    <property type="match status" value="1"/>
</dbReference>
<dbReference type="PROSITE" id="PS01176">
    <property type="entry name" value="IF2"/>
    <property type="match status" value="1"/>
</dbReference>
<keyword id="KW-0963">Cytoplasm</keyword>
<keyword id="KW-0342">GTP-binding</keyword>
<keyword id="KW-0396">Initiation factor</keyword>
<keyword id="KW-0547">Nucleotide-binding</keyword>
<keyword id="KW-0648">Protein biosynthesis</keyword>
<keyword id="KW-1185">Reference proteome</keyword>
<protein>
    <recommendedName>
        <fullName>Translation initiation factor IF-2</fullName>
    </recommendedName>
</protein>
<organism>
    <name type="scientific">Lactococcus lactis subsp. lactis (strain IL1403)</name>
    <name type="common">Streptococcus lactis</name>
    <dbReference type="NCBI Taxonomy" id="272623"/>
    <lineage>
        <taxon>Bacteria</taxon>
        <taxon>Bacillati</taxon>
        <taxon>Bacillota</taxon>
        <taxon>Bacilli</taxon>
        <taxon>Lactobacillales</taxon>
        <taxon>Streptococcaceae</taxon>
        <taxon>Lactococcus</taxon>
    </lineage>
</organism>
<sequence>MSDKKRINQIAKETGLTNAELVSAAQTLGFEVKSHSSSVTAEQAEKIIQSAKTGTDQTAKVAEKPVKKSQPKAAESAKKNKEDHPRTFAGKAVVEDPAILARIKAKEEAEKAAKVEVASTEHPVVTEKPKASEPVKKAEPKVEAKSEPKVEKVETKDNTATSKAEVKPENVADKKEPVVTEEKKKSLTQKPRIQIKVIKRAEDIKKEQAAARPEKKKFDKNRNDRNNRSDNRRPNQNGNGQGGNHYDKNRSSGQGQNQGQKRDKFASSGSAPATDSFTPATSGKTSRRDRDRKKSDNNRDNTKDGNRKGGPLRVNDNRNQVRNARNSNWNQKGGRGRYQNNQSSSVPATQRKFHELPESLEYEVGMNVQDIAKSIKREPAEIIKKLFMMGTMVNQNQSLDEDTIELILMDYGVTPVKKVEEDKSDIERLFVEDGYLKEENMVERPAVVTIMGHVDHGKTTLLDRFRESRVTEGEAGGITQHIGAYQIKANGKKITFLDTPGHEAFTSMRARGASVTDITILVVAADDGVMPQTIEAINHSKAAGVPIIVAINKIDKPGANPQRVTQELTEHGVFPVAWDPENGSEFVEISAKFNQNLDELLDTVLLVAEVQELKADPTVRAIGTVVEARLDQGKGAIATLLVQQGTLHVQDPIVVGNTYGRVRTMTNDLGRRIKEAGPSTPIELTGLSDVPQAGDHFAVFEDEKAARAAGEERAKRAQLIKRQNTRRVNLDNLFDTLKEGQTKSVNIIIKADVQGSAEALAASLQKIEVEGVKVDIVHSAVGAISESDISLAAASNAIIIGFNVRPTGLAREQAAQEEVDIRLHSIIYKVIEEVETAMRGMLDPEFKEEIIGEAIVRETFNVSKVGTIAGFMVIRGKVARDASVRVIREGVVIHDGAIASLKHFKDDVKEVGNAQEGGLMVEDFNDVEIDDTFEVYKMVEIERK</sequence>
<name>IF2_LACLA</name>
<feature type="chain" id="PRO_0000137211" description="Translation initiation factor IF-2">
    <location>
        <begin position="1"/>
        <end position="944"/>
    </location>
</feature>
<feature type="domain" description="tr-type G">
    <location>
        <begin position="443"/>
        <end position="614"/>
    </location>
</feature>
<feature type="region of interest" description="Disordered" evidence="2">
    <location>
        <begin position="50"/>
        <end position="91"/>
    </location>
</feature>
<feature type="region of interest" description="Disordered" evidence="2">
    <location>
        <begin position="114"/>
        <end position="349"/>
    </location>
</feature>
<feature type="region of interest" description="G1" evidence="1">
    <location>
        <begin position="452"/>
        <end position="459"/>
    </location>
</feature>
<feature type="region of interest" description="G2" evidence="1">
    <location>
        <begin position="477"/>
        <end position="481"/>
    </location>
</feature>
<feature type="region of interest" description="G3" evidence="1">
    <location>
        <begin position="498"/>
        <end position="501"/>
    </location>
</feature>
<feature type="region of interest" description="G4" evidence="1">
    <location>
        <begin position="552"/>
        <end position="555"/>
    </location>
</feature>
<feature type="region of interest" description="G5" evidence="1">
    <location>
        <begin position="590"/>
        <end position="592"/>
    </location>
</feature>
<feature type="compositionally biased region" description="Basic and acidic residues" evidence="2">
    <location>
        <begin position="75"/>
        <end position="86"/>
    </location>
</feature>
<feature type="compositionally biased region" description="Basic and acidic residues" evidence="2">
    <location>
        <begin position="124"/>
        <end position="157"/>
    </location>
</feature>
<feature type="compositionally biased region" description="Basic and acidic residues" evidence="2">
    <location>
        <begin position="164"/>
        <end position="185"/>
    </location>
</feature>
<feature type="compositionally biased region" description="Basic and acidic residues" evidence="2">
    <location>
        <begin position="199"/>
        <end position="233"/>
    </location>
</feature>
<feature type="compositionally biased region" description="Polar residues" evidence="2">
    <location>
        <begin position="267"/>
        <end position="280"/>
    </location>
</feature>
<feature type="compositionally biased region" description="Basic and acidic residues" evidence="2">
    <location>
        <begin position="286"/>
        <end position="307"/>
    </location>
</feature>
<feature type="compositionally biased region" description="Polar residues" evidence="2">
    <location>
        <begin position="317"/>
        <end position="331"/>
    </location>
</feature>
<feature type="compositionally biased region" description="Polar residues" evidence="2">
    <location>
        <begin position="338"/>
        <end position="348"/>
    </location>
</feature>
<feature type="binding site" evidence="1">
    <location>
        <begin position="452"/>
        <end position="459"/>
    </location>
    <ligand>
        <name>GTP</name>
        <dbReference type="ChEBI" id="CHEBI:37565"/>
    </ligand>
</feature>
<feature type="binding site" evidence="1">
    <location>
        <begin position="498"/>
        <end position="502"/>
    </location>
    <ligand>
        <name>GTP</name>
        <dbReference type="ChEBI" id="CHEBI:37565"/>
    </ligand>
</feature>
<feature type="binding site" evidence="1">
    <location>
        <begin position="552"/>
        <end position="555"/>
    </location>
    <ligand>
        <name>GTP</name>
        <dbReference type="ChEBI" id="CHEBI:37565"/>
    </ligand>
</feature>
<evidence type="ECO:0000250" key="1"/>
<evidence type="ECO:0000256" key="2">
    <source>
        <dbReference type="SAM" id="MobiDB-lite"/>
    </source>
</evidence>
<evidence type="ECO:0000305" key="3"/>
<gene>
    <name type="primary">infB</name>
    <name type="ordered locus">LL0767</name>
    <name type="ORF">L0372</name>
</gene>
<accession>P58002</accession>
<accession>Q9CHG4</accession>
<proteinExistence type="inferred from homology"/>
<comment type="function">
    <text evidence="1">One of the essential components for the initiation of protein synthesis. Protects formylmethionyl-tRNA from spontaneous hydrolysis and promotes its binding to the 30S ribosomal subunits. Also involved in the hydrolysis of GTP during the formation of the 70S ribosomal complex (By similarity).</text>
</comment>
<comment type="subcellular location">
    <subcellularLocation>
        <location evidence="1">Cytoplasm</location>
    </subcellularLocation>
</comment>
<comment type="similarity">
    <text evidence="3">Belongs to the TRAFAC class translation factor GTPase superfamily. Classic translation factor GTPase family. IF-2 subfamily.</text>
</comment>